<dbReference type="EMBL" id="U00096">
    <property type="protein sequence ID" value="AAC74421.1"/>
    <property type="molecule type" value="Genomic_DNA"/>
</dbReference>
<dbReference type="EMBL" id="AP009048">
    <property type="protein sequence ID" value="BAA14941.1"/>
    <property type="molecule type" value="Genomic_DNA"/>
</dbReference>
<dbReference type="PIR" id="F64883">
    <property type="entry name" value="F64883"/>
</dbReference>
<dbReference type="RefSeq" id="NP_415855.1">
    <property type="nucleotide sequence ID" value="NC_000913.3"/>
</dbReference>
<dbReference type="RefSeq" id="WP_000885458.1">
    <property type="nucleotide sequence ID" value="NZ_LN832404.1"/>
</dbReference>
<dbReference type="SMR" id="P77744"/>
<dbReference type="BioGRID" id="4262879">
    <property type="interactions" value="125"/>
</dbReference>
<dbReference type="FunCoup" id="P77744">
    <property type="interactions" value="8"/>
</dbReference>
<dbReference type="IntAct" id="P77744">
    <property type="interactions" value="2"/>
</dbReference>
<dbReference type="STRING" id="511145.b1339"/>
<dbReference type="PaxDb" id="511145-b1339"/>
<dbReference type="EnsemblBacteria" id="AAC74421">
    <property type="protein sequence ID" value="AAC74421"/>
    <property type="gene ID" value="b1339"/>
</dbReference>
<dbReference type="GeneID" id="945831"/>
<dbReference type="KEGG" id="ecj:JW1333"/>
<dbReference type="KEGG" id="eco:b1339"/>
<dbReference type="KEGG" id="ecoc:C3026_07840"/>
<dbReference type="PATRIC" id="fig|1411691.4.peg.938"/>
<dbReference type="EchoBASE" id="EB3136"/>
<dbReference type="eggNOG" id="COG0583">
    <property type="taxonomic scope" value="Bacteria"/>
</dbReference>
<dbReference type="HOGENOM" id="CLU_039613_6_0_6"/>
<dbReference type="InParanoid" id="P77744"/>
<dbReference type="OMA" id="WGGETLP"/>
<dbReference type="OrthoDB" id="8437302at2"/>
<dbReference type="PhylomeDB" id="P77744"/>
<dbReference type="BioCyc" id="EcoCyc:G6671-MONOMER"/>
<dbReference type="PRO" id="PR:P77744"/>
<dbReference type="Proteomes" id="UP000000625">
    <property type="component" value="Chromosome"/>
</dbReference>
<dbReference type="GO" id="GO:0003700">
    <property type="term" value="F:DNA-binding transcription factor activity"/>
    <property type="evidence" value="ECO:0007669"/>
    <property type="project" value="InterPro"/>
</dbReference>
<dbReference type="GO" id="GO:0000976">
    <property type="term" value="F:transcription cis-regulatory region binding"/>
    <property type="evidence" value="ECO:0000318"/>
    <property type="project" value="GO_Central"/>
</dbReference>
<dbReference type="GO" id="GO:0006355">
    <property type="term" value="P:regulation of DNA-templated transcription"/>
    <property type="evidence" value="ECO:0000318"/>
    <property type="project" value="GO_Central"/>
</dbReference>
<dbReference type="CDD" id="cd08418">
    <property type="entry name" value="PBP2_TdcA"/>
    <property type="match status" value="1"/>
</dbReference>
<dbReference type="FunFam" id="1.10.10.10:FF:000001">
    <property type="entry name" value="LysR family transcriptional regulator"/>
    <property type="match status" value="1"/>
</dbReference>
<dbReference type="Gene3D" id="3.40.190.290">
    <property type="match status" value="1"/>
</dbReference>
<dbReference type="Gene3D" id="1.10.10.10">
    <property type="entry name" value="Winged helix-like DNA-binding domain superfamily/Winged helix DNA-binding domain"/>
    <property type="match status" value="1"/>
</dbReference>
<dbReference type="InterPro" id="IPR050950">
    <property type="entry name" value="HTH-type_LysR_regulators"/>
</dbReference>
<dbReference type="InterPro" id="IPR005119">
    <property type="entry name" value="LysR_subst-bd"/>
</dbReference>
<dbReference type="InterPro" id="IPR047993">
    <property type="entry name" value="TdcA/AbgR_PBP2"/>
</dbReference>
<dbReference type="InterPro" id="IPR000847">
    <property type="entry name" value="Tscrpt_reg_HTH_LysR"/>
</dbReference>
<dbReference type="InterPro" id="IPR036388">
    <property type="entry name" value="WH-like_DNA-bd_sf"/>
</dbReference>
<dbReference type="InterPro" id="IPR036390">
    <property type="entry name" value="WH_DNA-bd_sf"/>
</dbReference>
<dbReference type="NCBIfam" id="NF007307">
    <property type="entry name" value="PRK09791.1"/>
    <property type="match status" value="1"/>
</dbReference>
<dbReference type="PANTHER" id="PTHR30419">
    <property type="entry name" value="HTH-TYPE TRANSCRIPTIONAL REGULATOR YBHD"/>
    <property type="match status" value="1"/>
</dbReference>
<dbReference type="PANTHER" id="PTHR30419:SF8">
    <property type="entry name" value="NITROGEN ASSIMILATION TRANSCRIPTIONAL ACTIVATOR-RELATED"/>
    <property type="match status" value="1"/>
</dbReference>
<dbReference type="Pfam" id="PF00126">
    <property type="entry name" value="HTH_1"/>
    <property type="match status" value="1"/>
</dbReference>
<dbReference type="Pfam" id="PF03466">
    <property type="entry name" value="LysR_substrate"/>
    <property type="match status" value="1"/>
</dbReference>
<dbReference type="PRINTS" id="PR00039">
    <property type="entry name" value="HTHLYSR"/>
</dbReference>
<dbReference type="SUPFAM" id="SSF53850">
    <property type="entry name" value="Periplasmic binding protein-like II"/>
    <property type="match status" value="1"/>
</dbReference>
<dbReference type="SUPFAM" id="SSF46785">
    <property type="entry name" value="Winged helix' DNA-binding domain"/>
    <property type="match status" value="1"/>
</dbReference>
<dbReference type="PROSITE" id="PS50931">
    <property type="entry name" value="HTH_LYSR"/>
    <property type="match status" value="1"/>
</dbReference>
<name>ABGR_ECOLI</name>
<proteinExistence type="inferred from homology"/>
<reference key="1">
    <citation type="journal article" date="1996" name="DNA Res.">
        <title>A 570-kb DNA sequence of the Escherichia coli K-12 genome corresponding to the 28.0-40.1 min region on the linkage map.</title>
        <authorList>
            <person name="Aiba H."/>
            <person name="Baba T."/>
            <person name="Fujita K."/>
            <person name="Hayashi K."/>
            <person name="Inada T."/>
            <person name="Isono K."/>
            <person name="Itoh T."/>
            <person name="Kasai H."/>
            <person name="Kashimoto K."/>
            <person name="Kimura S."/>
            <person name="Kitakawa M."/>
            <person name="Kitagawa M."/>
            <person name="Makino K."/>
            <person name="Miki T."/>
            <person name="Mizobuchi K."/>
            <person name="Mori H."/>
            <person name="Mori T."/>
            <person name="Motomura K."/>
            <person name="Nakade S."/>
            <person name="Nakamura Y."/>
            <person name="Nashimoto H."/>
            <person name="Nishio Y."/>
            <person name="Oshima T."/>
            <person name="Saito N."/>
            <person name="Sampei G."/>
            <person name="Seki Y."/>
            <person name="Sivasundaram S."/>
            <person name="Tagami H."/>
            <person name="Takeda J."/>
            <person name="Takemoto K."/>
            <person name="Takeuchi Y."/>
            <person name="Wada C."/>
            <person name="Yamamoto Y."/>
            <person name="Horiuchi T."/>
        </authorList>
    </citation>
    <scope>NUCLEOTIDE SEQUENCE [LARGE SCALE GENOMIC DNA]</scope>
    <source>
        <strain>K12 / W3110 / ATCC 27325 / DSM 5911</strain>
    </source>
</reference>
<reference key="2">
    <citation type="journal article" date="1997" name="Science">
        <title>The complete genome sequence of Escherichia coli K-12.</title>
        <authorList>
            <person name="Blattner F.R."/>
            <person name="Plunkett G. III"/>
            <person name="Bloch C.A."/>
            <person name="Perna N.T."/>
            <person name="Burland V."/>
            <person name="Riley M."/>
            <person name="Collado-Vides J."/>
            <person name="Glasner J.D."/>
            <person name="Rode C.K."/>
            <person name="Mayhew G.F."/>
            <person name="Gregor J."/>
            <person name="Davis N.W."/>
            <person name="Kirkpatrick H.A."/>
            <person name="Goeden M.A."/>
            <person name="Rose D.J."/>
            <person name="Mau B."/>
            <person name="Shao Y."/>
        </authorList>
    </citation>
    <scope>NUCLEOTIDE SEQUENCE [LARGE SCALE GENOMIC DNA]</scope>
    <source>
        <strain>K12 / MG1655 / ATCC 47076</strain>
    </source>
</reference>
<reference key="3">
    <citation type="journal article" date="2006" name="Mol. Syst. Biol.">
        <title>Highly accurate genome sequences of Escherichia coli K-12 strains MG1655 and W3110.</title>
        <authorList>
            <person name="Hayashi K."/>
            <person name="Morooka N."/>
            <person name="Yamamoto Y."/>
            <person name="Fujita K."/>
            <person name="Isono K."/>
            <person name="Choi S."/>
            <person name="Ohtsubo E."/>
            <person name="Baba T."/>
            <person name="Wanner B.L."/>
            <person name="Mori H."/>
            <person name="Horiuchi T."/>
        </authorList>
    </citation>
    <scope>NUCLEOTIDE SEQUENCE [LARGE SCALE GENOMIC DNA]</scope>
    <source>
        <strain>K12 / W3110 / ATCC 27325 / DSM 5911</strain>
    </source>
</reference>
<reference key="4">
    <citation type="journal article" date="1998" name="J. Bacteriol.">
        <title>Characterization of mutations that allow p-aminobenzoyl-glutamate utilization by Escherichia coli.</title>
        <authorList>
            <person name="Hussein M.J."/>
            <person name="Green J.M."/>
            <person name="Nichols B.P."/>
        </authorList>
    </citation>
    <scope>DISRUPTION PHENOTYPE</scope>
    <source>
        <strain>BN101</strain>
    </source>
</reference>
<comment type="function">
    <text>Could be the regulator of the abg operon.</text>
</comment>
<comment type="disruption phenotype">
    <text evidence="2">Cells lacking this gene may lead to an altered expression of abgT.</text>
</comment>
<comment type="similarity">
    <text evidence="3">Belongs to the LysR transcriptional regulatory family.</text>
</comment>
<feature type="chain" id="PRO_0000105583" description="HTH-type transcriptional regulator AbgR">
    <location>
        <begin position="1"/>
        <end position="302"/>
    </location>
</feature>
<feature type="domain" description="HTH lysR-type" evidence="1">
    <location>
        <begin position="5"/>
        <end position="62"/>
    </location>
</feature>
<feature type="DNA-binding region" description="H-T-H motif" evidence="1">
    <location>
        <begin position="22"/>
        <end position="41"/>
    </location>
</feature>
<organism>
    <name type="scientific">Escherichia coli (strain K12)</name>
    <dbReference type="NCBI Taxonomy" id="83333"/>
    <lineage>
        <taxon>Bacteria</taxon>
        <taxon>Pseudomonadati</taxon>
        <taxon>Pseudomonadota</taxon>
        <taxon>Gammaproteobacteria</taxon>
        <taxon>Enterobacterales</taxon>
        <taxon>Enterobacteriaceae</taxon>
        <taxon>Escherichia</taxon>
    </lineage>
</organism>
<protein>
    <recommendedName>
        <fullName>HTH-type transcriptional regulator AbgR</fullName>
    </recommendedName>
</protein>
<keyword id="KW-0238">DNA-binding</keyword>
<keyword id="KW-1185">Reference proteome</keyword>
<keyword id="KW-0804">Transcription</keyword>
<keyword id="KW-0805">Transcription regulation</keyword>
<evidence type="ECO:0000255" key="1">
    <source>
        <dbReference type="PROSITE-ProRule" id="PRU00253"/>
    </source>
</evidence>
<evidence type="ECO:0000269" key="2">
    <source>
    </source>
</evidence>
<evidence type="ECO:0000305" key="3"/>
<sequence length="302" mass="34058">MAFQVKIHQIRAFVEVARQGSIRGASRMLNMSQPALSKSIQELEEGLAAQLFFRRSKGVTLTDAGESFYQHASLILEELRAAQEDIRQRQGQLAGQINIGMGASISRSLMPAVISRFHQQHPQVKVRIMEGQLVSMINELRQGELDFTINTYYQGPYDHEFTFEKLLEKQFAIFCRPGHPAIGARSIKQLLDYSWTMPTPHGSYYKQLSELLDDQAQTPQVGVVCETFSACISLVAKSDFLSKLPEEMGCDPLHGQGLVMLPVSEILPKAAYYLIQRRDSRQTPLTASLITQFRRECGYLQS</sequence>
<accession>P77744</accession>
<gene>
    <name type="primary">abgR</name>
    <name type="ordered locus">b1339</name>
    <name type="ordered locus">JW1333</name>
</gene>